<feature type="chain" id="PRO_1000194340" description="Small ribosomal subunit protein uS2">
    <location>
        <begin position="1"/>
        <end position="349"/>
    </location>
</feature>
<organism>
    <name type="scientific">Methylocella silvestris (strain DSM 15510 / CIP 108128 / LMG 27833 / NCIMB 13906 / BL2)</name>
    <dbReference type="NCBI Taxonomy" id="395965"/>
    <lineage>
        <taxon>Bacteria</taxon>
        <taxon>Pseudomonadati</taxon>
        <taxon>Pseudomonadota</taxon>
        <taxon>Alphaproteobacteria</taxon>
        <taxon>Hyphomicrobiales</taxon>
        <taxon>Beijerinckiaceae</taxon>
        <taxon>Methylocella</taxon>
    </lineage>
</organism>
<protein>
    <recommendedName>
        <fullName evidence="1">Small ribosomal subunit protein uS2</fullName>
    </recommendedName>
    <alternativeName>
        <fullName evidence="2">30S ribosomal protein S2</fullName>
    </alternativeName>
</protein>
<comment type="similarity">
    <text evidence="1">Belongs to the universal ribosomal protein uS2 family.</text>
</comment>
<proteinExistence type="inferred from homology"/>
<accession>B8EKA1</accession>
<evidence type="ECO:0000255" key="1">
    <source>
        <dbReference type="HAMAP-Rule" id="MF_00291"/>
    </source>
</evidence>
<evidence type="ECO:0000305" key="2"/>
<keyword id="KW-1185">Reference proteome</keyword>
<keyword id="KW-0687">Ribonucleoprotein</keyword>
<keyword id="KW-0689">Ribosomal protein</keyword>
<gene>
    <name evidence="1" type="primary">rpsB</name>
    <name type="ordered locus">Msil_1694</name>
</gene>
<sequence length="349" mass="37703">MSLPDFTMRSLLDAGAHFGHQSHRWNPKMEPFIFGTRNNIHIIDLAQTVPLLHQALKAVSDTVARGGRVLFVGTKRQAQDAIADAAHRSAQYYINSRWLGGMLTNWKTISASIQRLRKVEETLQGGGSGLTKKERLMMSRERDKLEKALGGIKEMGGIPDLIFVIDTNKEQLAIKEAERLHIPVAAILDTNCNPDGITFPIPGNDDAGRAIALYCDLIARAALDGIARGQGAGGVDFGEADQPPAEDLPAADLPAETPEPTTAVTEAYEAPAEAFELLTAPRGAPDDLGKLPGIGPQIVKKLNDAGLYHFWQIAAMTPEDAAKTDHDLKLGGRIERDGWVNVARSLVAA</sequence>
<name>RS2_METSB</name>
<reference key="1">
    <citation type="journal article" date="2010" name="J. Bacteriol.">
        <title>Complete genome sequence of the aerobic facultative methanotroph Methylocella silvestris BL2.</title>
        <authorList>
            <person name="Chen Y."/>
            <person name="Crombie A."/>
            <person name="Rahman M.T."/>
            <person name="Dedysh S.N."/>
            <person name="Liesack W."/>
            <person name="Stott M.B."/>
            <person name="Alam M."/>
            <person name="Theisen A.R."/>
            <person name="Murrell J.C."/>
            <person name="Dunfield P.F."/>
        </authorList>
    </citation>
    <scope>NUCLEOTIDE SEQUENCE [LARGE SCALE GENOMIC DNA]</scope>
    <source>
        <strain>DSM 15510 / CIP 108128 / LMG 27833 / NCIMB 13906 / BL2</strain>
    </source>
</reference>
<dbReference type="EMBL" id="CP001280">
    <property type="protein sequence ID" value="ACK50641.1"/>
    <property type="molecule type" value="Genomic_DNA"/>
</dbReference>
<dbReference type="RefSeq" id="WP_012590711.1">
    <property type="nucleotide sequence ID" value="NC_011666.1"/>
</dbReference>
<dbReference type="SMR" id="B8EKA1"/>
<dbReference type="STRING" id="395965.Msil_1694"/>
<dbReference type="KEGG" id="msl:Msil_1694"/>
<dbReference type="eggNOG" id="COG0052">
    <property type="taxonomic scope" value="Bacteria"/>
</dbReference>
<dbReference type="eggNOG" id="COG3743">
    <property type="taxonomic scope" value="Bacteria"/>
</dbReference>
<dbReference type="HOGENOM" id="CLU_040318_2_1_5"/>
<dbReference type="OrthoDB" id="9808036at2"/>
<dbReference type="Proteomes" id="UP000002257">
    <property type="component" value="Chromosome"/>
</dbReference>
<dbReference type="GO" id="GO:0022627">
    <property type="term" value="C:cytosolic small ribosomal subunit"/>
    <property type="evidence" value="ECO:0007669"/>
    <property type="project" value="TreeGrafter"/>
</dbReference>
<dbReference type="GO" id="GO:0003735">
    <property type="term" value="F:structural constituent of ribosome"/>
    <property type="evidence" value="ECO:0007669"/>
    <property type="project" value="InterPro"/>
</dbReference>
<dbReference type="GO" id="GO:0006412">
    <property type="term" value="P:translation"/>
    <property type="evidence" value="ECO:0007669"/>
    <property type="project" value="UniProtKB-UniRule"/>
</dbReference>
<dbReference type="CDD" id="cd01425">
    <property type="entry name" value="RPS2"/>
    <property type="match status" value="1"/>
</dbReference>
<dbReference type="FunFam" id="1.10.287.610:FF:000001">
    <property type="entry name" value="30S ribosomal protein S2"/>
    <property type="match status" value="1"/>
</dbReference>
<dbReference type="Gene3D" id="1.10.150.20">
    <property type="entry name" value="5' to 3' exonuclease, C-terminal subdomain"/>
    <property type="match status" value="1"/>
</dbReference>
<dbReference type="Gene3D" id="3.40.50.10490">
    <property type="entry name" value="Glucose-6-phosphate isomerase like protein, domain 1"/>
    <property type="match status" value="1"/>
</dbReference>
<dbReference type="Gene3D" id="1.10.287.610">
    <property type="entry name" value="Helix hairpin bin"/>
    <property type="match status" value="1"/>
</dbReference>
<dbReference type="HAMAP" id="MF_00291_B">
    <property type="entry name" value="Ribosomal_uS2_B"/>
    <property type="match status" value="1"/>
</dbReference>
<dbReference type="InterPro" id="IPR001865">
    <property type="entry name" value="Ribosomal_uS2"/>
</dbReference>
<dbReference type="InterPro" id="IPR005706">
    <property type="entry name" value="Ribosomal_uS2_bac/mit/plastid"/>
</dbReference>
<dbReference type="InterPro" id="IPR018130">
    <property type="entry name" value="Ribosomal_uS2_CS"/>
</dbReference>
<dbReference type="InterPro" id="IPR023591">
    <property type="entry name" value="Ribosomal_uS2_flav_dom_sf"/>
</dbReference>
<dbReference type="NCBIfam" id="NF008966">
    <property type="entry name" value="PRK12311.1"/>
    <property type="match status" value="1"/>
</dbReference>
<dbReference type="NCBIfam" id="TIGR01011">
    <property type="entry name" value="rpsB_bact"/>
    <property type="match status" value="1"/>
</dbReference>
<dbReference type="PANTHER" id="PTHR12534">
    <property type="entry name" value="30S RIBOSOMAL PROTEIN S2 PROKARYOTIC AND ORGANELLAR"/>
    <property type="match status" value="1"/>
</dbReference>
<dbReference type="PANTHER" id="PTHR12534:SF0">
    <property type="entry name" value="SMALL RIBOSOMAL SUBUNIT PROTEIN US2M"/>
    <property type="match status" value="1"/>
</dbReference>
<dbReference type="Pfam" id="PF00318">
    <property type="entry name" value="Ribosomal_S2"/>
    <property type="match status" value="1"/>
</dbReference>
<dbReference type="PRINTS" id="PR00395">
    <property type="entry name" value="RIBOSOMALS2"/>
</dbReference>
<dbReference type="SUPFAM" id="SSF52313">
    <property type="entry name" value="Ribosomal protein S2"/>
    <property type="match status" value="1"/>
</dbReference>
<dbReference type="PROSITE" id="PS00962">
    <property type="entry name" value="RIBOSOMAL_S2_1"/>
    <property type="match status" value="1"/>
</dbReference>
<dbReference type="PROSITE" id="PS00963">
    <property type="entry name" value="RIBOSOMAL_S2_2"/>
    <property type="match status" value="1"/>
</dbReference>